<accession>Q5HJZ0</accession>
<reference key="1">
    <citation type="journal article" date="2005" name="J. Bacteriol.">
        <title>Insights on evolution of virulence and resistance from the complete genome analysis of an early methicillin-resistant Staphylococcus aureus strain and a biofilm-producing methicillin-resistant Staphylococcus epidermidis strain.</title>
        <authorList>
            <person name="Gill S.R."/>
            <person name="Fouts D.E."/>
            <person name="Archer G.L."/>
            <person name="Mongodin E.F."/>
            <person name="DeBoy R.T."/>
            <person name="Ravel J."/>
            <person name="Paulsen I.T."/>
            <person name="Kolonay J.F."/>
            <person name="Brinkac L.M."/>
            <person name="Beanan M.J."/>
            <person name="Dodson R.J."/>
            <person name="Daugherty S.C."/>
            <person name="Madupu R."/>
            <person name="Angiuoli S.V."/>
            <person name="Durkin A.S."/>
            <person name="Haft D.H."/>
            <person name="Vamathevan J.J."/>
            <person name="Khouri H."/>
            <person name="Utterback T.R."/>
            <person name="Lee C."/>
            <person name="Dimitrov G."/>
            <person name="Jiang L."/>
            <person name="Qin H."/>
            <person name="Weidman J."/>
            <person name="Tran K."/>
            <person name="Kang K.H."/>
            <person name="Hance I.R."/>
            <person name="Nelson K.E."/>
            <person name="Fraser C.M."/>
        </authorList>
    </citation>
    <scope>NUCLEOTIDE SEQUENCE [LARGE SCALE GENOMIC DNA]</scope>
    <source>
        <strain>COL</strain>
    </source>
</reference>
<organism>
    <name type="scientific">Staphylococcus aureus (strain COL)</name>
    <dbReference type="NCBI Taxonomy" id="93062"/>
    <lineage>
        <taxon>Bacteria</taxon>
        <taxon>Bacillati</taxon>
        <taxon>Bacillota</taxon>
        <taxon>Bacilli</taxon>
        <taxon>Bacillales</taxon>
        <taxon>Staphylococcaceae</taxon>
        <taxon>Staphylococcus</taxon>
    </lineage>
</organism>
<proteinExistence type="inferred from homology"/>
<evidence type="ECO:0000255" key="1">
    <source>
        <dbReference type="HAMAP-Rule" id="MF_01897"/>
    </source>
</evidence>
<evidence type="ECO:0000255" key="2">
    <source>
        <dbReference type="PROSITE-ProRule" id="PRU01384"/>
    </source>
</evidence>
<evidence type="ECO:0000256" key="3">
    <source>
        <dbReference type="SAM" id="MobiDB-lite"/>
    </source>
</evidence>
<protein>
    <recommendedName>
        <fullName evidence="1">DNA gyrase subunit A</fullName>
        <ecNumber evidence="1">5.6.2.2</ecNumber>
    </recommendedName>
</protein>
<name>GYRA_STAAC</name>
<feature type="chain" id="PRO_0000145251" description="DNA gyrase subunit A">
    <location>
        <begin position="1"/>
        <end position="887"/>
    </location>
</feature>
<feature type="domain" description="Topo IIA-type catalytic" evidence="2">
    <location>
        <begin position="35"/>
        <end position="501"/>
    </location>
</feature>
<feature type="region of interest" description="Disordered" evidence="3">
    <location>
        <begin position="811"/>
        <end position="864"/>
    </location>
</feature>
<feature type="short sequence motif" description="GyrA-box" evidence="1">
    <location>
        <begin position="528"/>
        <end position="534"/>
    </location>
</feature>
<feature type="compositionally biased region" description="Acidic residues" evidence="3">
    <location>
        <begin position="813"/>
        <end position="823"/>
    </location>
</feature>
<feature type="active site" description="O-(5'-phospho-DNA)-tyrosine intermediate" evidence="1">
    <location>
        <position position="123"/>
    </location>
</feature>
<comment type="function">
    <text evidence="1">A type II topoisomerase that negatively supercoils closed circular double-stranded (ds) DNA in an ATP-dependent manner to modulate DNA topology and maintain chromosomes in an underwound state. Negative supercoiling favors strand separation, and DNA replication, transcription, recombination and repair, all of which involve strand separation. Also able to catalyze the interconversion of other topological isomers of dsDNA rings, including catenanes and knotted rings. Type II topoisomerases break and join 2 DNA strands simultaneously in an ATP-dependent manner.</text>
</comment>
<comment type="catalytic activity">
    <reaction evidence="1">
        <text>ATP-dependent breakage, passage and rejoining of double-stranded DNA.</text>
        <dbReference type="EC" id="5.6.2.2"/>
    </reaction>
</comment>
<comment type="subunit">
    <text evidence="1">Heterotetramer, composed of two GyrA and two GyrB chains. In the heterotetramer, GyrA contains the active site tyrosine that forms a transient covalent intermediate with DNA, while GyrB binds cofactors and catalyzes ATP hydrolysis.</text>
</comment>
<comment type="subcellular location">
    <subcellularLocation>
        <location evidence="1">Cytoplasm</location>
    </subcellularLocation>
</comment>
<comment type="miscellaneous">
    <text evidence="1">Few gyrases are as efficient as E.coli at forming negative supercoils. Not all organisms have 2 type II topoisomerases; in organisms with a single type II topoisomerase this enzyme also has to decatenate newly replicated chromosomes.</text>
</comment>
<comment type="similarity">
    <text evidence="1">Belongs to the type II topoisomerase GyrA/ParC subunit family.</text>
</comment>
<keyword id="KW-0046">Antibiotic resistance</keyword>
<keyword id="KW-0067">ATP-binding</keyword>
<keyword id="KW-0963">Cytoplasm</keyword>
<keyword id="KW-0238">DNA-binding</keyword>
<keyword id="KW-0413">Isomerase</keyword>
<keyword id="KW-0547">Nucleotide-binding</keyword>
<keyword id="KW-0799">Topoisomerase</keyword>
<dbReference type="EC" id="5.6.2.2" evidence="1"/>
<dbReference type="EMBL" id="CP000046">
    <property type="protein sequence ID" value="AAW37394.1"/>
    <property type="molecule type" value="Genomic_DNA"/>
</dbReference>
<dbReference type="RefSeq" id="WP_000819088.1">
    <property type="nucleotide sequence ID" value="NZ_JBGOFO010000001.1"/>
</dbReference>
<dbReference type="SMR" id="Q5HJZ0"/>
<dbReference type="KEGG" id="sac:SACOL0006"/>
<dbReference type="HOGENOM" id="CLU_002977_6_1_9"/>
<dbReference type="Proteomes" id="UP000000530">
    <property type="component" value="Chromosome"/>
</dbReference>
<dbReference type="GO" id="GO:0005694">
    <property type="term" value="C:chromosome"/>
    <property type="evidence" value="ECO:0007669"/>
    <property type="project" value="InterPro"/>
</dbReference>
<dbReference type="GO" id="GO:0005737">
    <property type="term" value="C:cytoplasm"/>
    <property type="evidence" value="ECO:0007669"/>
    <property type="project" value="UniProtKB-SubCell"/>
</dbReference>
<dbReference type="GO" id="GO:0009330">
    <property type="term" value="C:DNA topoisomerase type II (double strand cut, ATP-hydrolyzing) complex"/>
    <property type="evidence" value="ECO:0007669"/>
    <property type="project" value="TreeGrafter"/>
</dbReference>
<dbReference type="GO" id="GO:0005524">
    <property type="term" value="F:ATP binding"/>
    <property type="evidence" value="ECO:0007669"/>
    <property type="project" value="UniProtKB-UniRule"/>
</dbReference>
<dbReference type="GO" id="GO:0003677">
    <property type="term" value="F:DNA binding"/>
    <property type="evidence" value="ECO:0007669"/>
    <property type="project" value="UniProtKB-UniRule"/>
</dbReference>
<dbReference type="GO" id="GO:0034335">
    <property type="term" value="F:DNA negative supercoiling activity"/>
    <property type="evidence" value="ECO:0007669"/>
    <property type="project" value="UniProtKB-ARBA"/>
</dbReference>
<dbReference type="GO" id="GO:0006265">
    <property type="term" value="P:DNA topological change"/>
    <property type="evidence" value="ECO:0007669"/>
    <property type="project" value="UniProtKB-UniRule"/>
</dbReference>
<dbReference type="GO" id="GO:0006261">
    <property type="term" value="P:DNA-templated DNA replication"/>
    <property type="evidence" value="ECO:0007669"/>
    <property type="project" value="UniProtKB-UniRule"/>
</dbReference>
<dbReference type="GO" id="GO:0046677">
    <property type="term" value="P:response to antibiotic"/>
    <property type="evidence" value="ECO:0007669"/>
    <property type="project" value="UniProtKB-KW"/>
</dbReference>
<dbReference type="CDD" id="cd00187">
    <property type="entry name" value="TOP4c"/>
    <property type="match status" value="1"/>
</dbReference>
<dbReference type="FunFam" id="1.10.268.10:FF:000001">
    <property type="entry name" value="DNA gyrase subunit A"/>
    <property type="match status" value="1"/>
</dbReference>
<dbReference type="FunFam" id="2.120.10.90:FF:000004">
    <property type="entry name" value="DNA gyrase subunit A"/>
    <property type="match status" value="1"/>
</dbReference>
<dbReference type="FunFam" id="3.30.1360.40:FF:000002">
    <property type="entry name" value="DNA gyrase subunit A"/>
    <property type="match status" value="1"/>
</dbReference>
<dbReference type="FunFam" id="3.90.199.10:FF:000001">
    <property type="entry name" value="DNA gyrase subunit A"/>
    <property type="match status" value="1"/>
</dbReference>
<dbReference type="Gene3D" id="3.30.1360.40">
    <property type="match status" value="1"/>
</dbReference>
<dbReference type="Gene3D" id="2.120.10.90">
    <property type="entry name" value="DNA gyrase/topoisomerase IV, subunit A, C-terminal"/>
    <property type="match status" value="1"/>
</dbReference>
<dbReference type="Gene3D" id="3.90.199.10">
    <property type="entry name" value="Topoisomerase II, domain 5"/>
    <property type="match status" value="1"/>
</dbReference>
<dbReference type="Gene3D" id="1.10.268.10">
    <property type="entry name" value="Topoisomerase, domain 3"/>
    <property type="match status" value="1"/>
</dbReference>
<dbReference type="HAMAP" id="MF_01897">
    <property type="entry name" value="GyrA"/>
    <property type="match status" value="1"/>
</dbReference>
<dbReference type="InterPro" id="IPR005743">
    <property type="entry name" value="GyrA"/>
</dbReference>
<dbReference type="InterPro" id="IPR006691">
    <property type="entry name" value="GyrA/parC_rep"/>
</dbReference>
<dbReference type="InterPro" id="IPR035516">
    <property type="entry name" value="Gyrase/topoIV_suA_C"/>
</dbReference>
<dbReference type="InterPro" id="IPR013760">
    <property type="entry name" value="Topo_IIA-like_dom_sf"/>
</dbReference>
<dbReference type="InterPro" id="IPR013758">
    <property type="entry name" value="Topo_IIA_A/C_ab"/>
</dbReference>
<dbReference type="InterPro" id="IPR013757">
    <property type="entry name" value="Topo_IIA_A_a_sf"/>
</dbReference>
<dbReference type="InterPro" id="IPR002205">
    <property type="entry name" value="Topo_IIA_dom_A"/>
</dbReference>
<dbReference type="InterPro" id="IPR050220">
    <property type="entry name" value="Type_II_DNA_Topoisomerases"/>
</dbReference>
<dbReference type="NCBIfam" id="TIGR01063">
    <property type="entry name" value="gyrA"/>
    <property type="match status" value="1"/>
</dbReference>
<dbReference type="NCBIfam" id="NF004043">
    <property type="entry name" value="PRK05560.1"/>
    <property type="match status" value="1"/>
</dbReference>
<dbReference type="NCBIfam" id="NF004044">
    <property type="entry name" value="PRK05561.1"/>
    <property type="match status" value="1"/>
</dbReference>
<dbReference type="PANTHER" id="PTHR43493:SF5">
    <property type="entry name" value="DNA GYRASE SUBUNIT A, CHLOROPLASTIC_MITOCHONDRIAL"/>
    <property type="match status" value="1"/>
</dbReference>
<dbReference type="PANTHER" id="PTHR43493">
    <property type="entry name" value="DNA GYRASE/TOPOISOMERASE SUBUNIT A"/>
    <property type="match status" value="1"/>
</dbReference>
<dbReference type="Pfam" id="PF03989">
    <property type="entry name" value="DNA_gyraseA_C"/>
    <property type="match status" value="6"/>
</dbReference>
<dbReference type="Pfam" id="PF00521">
    <property type="entry name" value="DNA_topoisoIV"/>
    <property type="match status" value="1"/>
</dbReference>
<dbReference type="SMART" id="SM00434">
    <property type="entry name" value="TOP4c"/>
    <property type="match status" value="1"/>
</dbReference>
<dbReference type="SUPFAM" id="SSF101904">
    <property type="entry name" value="GyrA/ParC C-terminal domain-like"/>
    <property type="match status" value="1"/>
</dbReference>
<dbReference type="SUPFAM" id="SSF56719">
    <property type="entry name" value="Type II DNA topoisomerase"/>
    <property type="match status" value="1"/>
</dbReference>
<dbReference type="PROSITE" id="PS52040">
    <property type="entry name" value="TOPO_IIA"/>
    <property type="match status" value="1"/>
</dbReference>
<sequence>MAELPQSRINERNITSEMRESFLDYAMSVIVARALPDVRDGLKPVHRRILYGLNEQGMTPDKSYKKSARIVGDVMGKYHPHGDSSIYEAMVRMAQDFSYRYPLVDGQGNFGSMDGDGAAAMRYTEARMTKITLELLRDINKDTIDFIDNYDGNEREPSVLPARFPNLLANGASGIAVGMATNIPPHNLTELINGVLSLSKNPDISIAELMEDIEGPDFPTAGLILGKSGIRRAYETGRGSIQMRSRAVIEERGGGRQRIVVTEIPFQVNKARMIEKIAELVRDKKIDGITDLRDETSLRTGVRVVIDVRKDANASVILNNLYKQTPLQTSFGVNMIALVNGRPKLINLKEALVHYLEHQKTVVRRRTQYNLRKAKDRAHILEGLRIALDHIDEIISTIRESDTDKVAMESLQQRFKLSEKQAQAILDMRLRRLTGLERDKIEAEYNELLNYISELEAILADEEVLLQLVRDELTEIRDRFGDDRRTEIQLGGFENLEDEDLIPEEQIVITLSHNNYIKRLPVSTYRAQNRGGRGVQGMNTLEEDFVSQLVTLSTHDHVLFFTNKGRVYKLKGYEVPELSRQSKGIPVVNAIELENDEVISTMIAVKDLESEDNFLVFATKRGVVKRSALSNFSRINRNGKIAISFREDDELIAVRLTSGQEDILIGTSHASLIRFPESTLRPLGRTATGVKGITLREGDEVVGLDVAHANSVDEVLVVTENGYGKRTPVNDYRLSNRGGKGIKTATITERNGNVVCITTVTGEEDLMIVTNAGVIIRLDVADISQNGRAAQGVRLIRLGDDQFVSTVAKVKEDAEDETNEDEQSTSTVSEDGTEQQREAVVNDETPGNAIHTEVIDSEENDEDGRIEVRQDFMDRVEEDIQQSSDEE</sequence>
<gene>
    <name evidence="1" type="primary">gyrA</name>
    <name type="ordered locus">SACOL0006</name>
</gene>